<protein>
    <recommendedName>
        <fullName evidence="1">Penicillin-insensitive murein endopeptidase</fullName>
        <ecNumber evidence="1">3.4.24.-</ecNumber>
    </recommendedName>
    <alternativeName>
        <fullName evidence="1">D-alanyl-D-alanine-endopeptidase</fullName>
        <shortName evidence="1">DD-endopeptidase</shortName>
    </alternativeName>
</protein>
<comment type="function">
    <text evidence="1">Murein endopeptidase that cleaves the D-alanyl-meso-2,6-diamino-pimelyl amide bond that connects peptidoglycan strands. Likely plays a role in the removal of murein from the sacculus.</text>
</comment>
<comment type="cofactor">
    <cofactor evidence="1">
        <name>Zn(2+)</name>
        <dbReference type="ChEBI" id="CHEBI:29105"/>
    </cofactor>
    <text evidence="1">Binds 2 Zn(2+) ions per subunit. Zn(2+) ion 1 is bound in the active site. Zn(2+) ion 2 is bound at the dimer interface by residues from both subunits.</text>
</comment>
<comment type="subunit">
    <text evidence="1">Dimer.</text>
</comment>
<comment type="subcellular location">
    <subcellularLocation>
        <location evidence="1">Periplasm</location>
    </subcellularLocation>
</comment>
<comment type="similarity">
    <text evidence="1">Belongs to the peptidase M74 family.</text>
</comment>
<organism>
    <name type="scientific">Shigella boydii serotype 18 (strain CDC 3083-94 / BS512)</name>
    <dbReference type="NCBI Taxonomy" id="344609"/>
    <lineage>
        <taxon>Bacteria</taxon>
        <taxon>Pseudomonadati</taxon>
        <taxon>Pseudomonadota</taxon>
        <taxon>Gammaproteobacteria</taxon>
        <taxon>Enterobacterales</taxon>
        <taxon>Enterobacteriaceae</taxon>
        <taxon>Shigella</taxon>
    </lineage>
</organism>
<evidence type="ECO:0000255" key="1">
    <source>
        <dbReference type="HAMAP-Rule" id="MF_01623"/>
    </source>
</evidence>
<evidence type="ECO:0000256" key="2">
    <source>
        <dbReference type="SAM" id="MobiDB-lite"/>
    </source>
</evidence>
<name>MEPA_SHIB3</name>
<dbReference type="EC" id="3.4.24.-" evidence="1"/>
<dbReference type="EMBL" id="CP001063">
    <property type="protein sequence ID" value="ACD09203.1"/>
    <property type="molecule type" value="Genomic_DNA"/>
</dbReference>
<dbReference type="RefSeq" id="WP_001043819.1">
    <property type="nucleotide sequence ID" value="NC_010658.1"/>
</dbReference>
<dbReference type="SMR" id="B2TWB0"/>
<dbReference type="STRING" id="344609.SbBS512_E2706"/>
<dbReference type="MEROPS" id="M74.001"/>
<dbReference type="KEGG" id="sbc:SbBS512_E2706"/>
<dbReference type="HOGENOM" id="CLU_052496_0_0_6"/>
<dbReference type="Proteomes" id="UP000001030">
    <property type="component" value="Chromosome"/>
</dbReference>
<dbReference type="GO" id="GO:0030288">
    <property type="term" value="C:outer membrane-bounded periplasmic space"/>
    <property type="evidence" value="ECO:0007669"/>
    <property type="project" value="InterPro"/>
</dbReference>
<dbReference type="GO" id="GO:0046872">
    <property type="term" value="F:metal ion binding"/>
    <property type="evidence" value="ECO:0007669"/>
    <property type="project" value="UniProtKB-KW"/>
</dbReference>
<dbReference type="GO" id="GO:0004222">
    <property type="term" value="F:metalloendopeptidase activity"/>
    <property type="evidence" value="ECO:0007669"/>
    <property type="project" value="UniProtKB-UniRule"/>
</dbReference>
<dbReference type="GO" id="GO:0004252">
    <property type="term" value="F:serine-type endopeptidase activity"/>
    <property type="evidence" value="ECO:0007669"/>
    <property type="project" value="InterPro"/>
</dbReference>
<dbReference type="GO" id="GO:0000270">
    <property type="term" value="P:peptidoglycan metabolic process"/>
    <property type="evidence" value="ECO:0007669"/>
    <property type="project" value="UniProtKB-UniRule"/>
</dbReference>
<dbReference type="GO" id="GO:0006508">
    <property type="term" value="P:proteolysis"/>
    <property type="evidence" value="ECO:0007669"/>
    <property type="project" value="UniProtKB-KW"/>
</dbReference>
<dbReference type="FunFam" id="3.30.1380.10:FF:000002">
    <property type="entry name" value="Penicillin-insensitive murein endopeptidase"/>
    <property type="match status" value="1"/>
</dbReference>
<dbReference type="Gene3D" id="3.30.1380.10">
    <property type="match status" value="1"/>
</dbReference>
<dbReference type="HAMAP" id="MF_01623">
    <property type="entry name" value="MepA"/>
    <property type="match status" value="1"/>
</dbReference>
<dbReference type="InterPro" id="IPR009045">
    <property type="entry name" value="Hedgehog_sig/DD-Pept_Zn-bd_sf"/>
</dbReference>
<dbReference type="InterPro" id="IPR005073">
    <property type="entry name" value="Peptidase_M74"/>
</dbReference>
<dbReference type="NCBIfam" id="NF006947">
    <property type="entry name" value="PRK09429.1"/>
    <property type="match status" value="1"/>
</dbReference>
<dbReference type="Pfam" id="PF03411">
    <property type="entry name" value="Peptidase_M74"/>
    <property type="match status" value="1"/>
</dbReference>
<dbReference type="PIRSF" id="PIRSF018455">
    <property type="entry name" value="MepA"/>
    <property type="match status" value="1"/>
</dbReference>
<dbReference type="SUPFAM" id="SSF55166">
    <property type="entry name" value="Hedgehog/DD-peptidase"/>
    <property type="match status" value="1"/>
</dbReference>
<sequence>MNKTAIALLALLASSASLAATPWQKITQPVPGSAQSIGSFSNGCIVGADTLPIQSEHYQVMRTDQRRYFGHPDLVMFIQRLSSQVSNLGMGTVLIGDMGMPAGGRFNGGHASHQTGLDVDIFLQLPKTRWTSAQLLRPQALDLVSRDGKHVVSTLWKPEIFSLIKLAAQDKDVTRIFVNPAIKQQLCLDAGTDRDWLRKVRPWFQHRAHMHVRLRCPADSLECEDQPLPPPGDGCGAELQSWFAPPKPGTTKPEKKTPPPLPPSCQALLDEHVI</sequence>
<reference key="1">
    <citation type="submission" date="2008-05" db="EMBL/GenBank/DDBJ databases">
        <title>Complete sequence of Shigella boydii serotype 18 strain BS512.</title>
        <authorList>
            <person name="Rasko D.A."/>
            <person name="Rosovitz M."/>
            <person name="Maurelli A.T."/>
            <person name="Myers G."/>
            <person name="Seshadri R."/>
            <person name="Cer R."/>
            <person name="Jiang L."/>
            <person name="Ravel J."/>
            <person name="Sebastian Y."/>
        </authorList>
    </citation>
    <scope>NUCLEOTIDE SEQUENCE [LARGE SCALE GENOMIC DNA]</scope>
    <source>
        <strain>CDC 3083-94 / BS512</strain>
    </source>
</reference>
<keyword id="KW-1015">Disulfide bond</keyword>
<keyword id="KW-0378">Hydrolase</keyword>
<keyword id="KW-0479">Metal-binding</keyword>
<keyword id="KW-0482">Metalloprotease</keyword>
<keyword id="KW-0574">Periplasm</keyword>
<keyword id="KW-0645">Protease</keyword>
<keyword id="KW-1185">Reference proteome</keyword>
<keyword id="KW-0732">Signal</keyword>
<keyword id="KW-0862">Zinc</keyword>
<proteinExistence type="inferred from homology"/>
<accession>B2TWB0</accession>
<gene>
    <name evidence="1" type="primary">mepA</name>
    <name type="ordered locus">SbBS512_E2706</name>
</gene>
<feature type="signal peptide" evidence="1">
    <location>
        <begin position="1"/>
        <end position="19"/>
    </location>
</feature>
<feature type="chain" id="PRO_1000186112" description="Penicillin-insensitive murein endopeptidase">
    <location>
        <begin position="20"/>
        <end position="274"/>
    </location>
</feature>
<feature type="region of interest" description="Disordered" evidence="2">
    <location>
        <begin position="228"/>
        <end position="265"/>
    </location>
</feature>
<feature type="binding site" evidence="1">
    <location>
        <position position="110"/>
    </location>
    <ligand>
        <name>Zn(2+)</name>
        <dbReference type="ChEBI" id="CHEBI:29105"/>
        <label>1</label>
    </ligand>
</feature>
<feature type="binding site" evidence="1">
    <location>
        <position position="113"/>
    </location>
    <ligand>
        <name>Zn(2+)</name>
        <dbReference type="ChEBI" id="CHEBI:29105"/>
        <label>1</label>
    </ligand>
</feature>
<feature type="binding site" evidence="1">
    <location>
        <position position="120"/>
    </location>
    <ligand>
        <name>Zn(2+)</name>
        <dbReference type="ChEBI" id="CHEBI:29105"/>
        <label>1</label>
    </ligand>
</feature>
<feature type="binding site" evidence="1">
    <location>
        <position position="147"/>
    </location>
    <ligand>
        <name>Zn(2+)</name>
        <dbReference type="ChEBI" id="CHEBI:29105"/>
        <label>2</label>
    </ligand>
</feature>
<feature type="binding site" evidence="1">
    <location>
        <position position="150"/>
    </location>
    <ligand>
        <name>Zn(2+)</name>
        <dbReference type="ChEBI" id="CHEBI:29105"/>
        <label>2</label>
    </ligand>
</feature>
<feature type="binding site" evidence="1">
    <location>
        <position position="211"/>
    </location>
    <ligand>
        <name>Zn(2+)</name>
        <dbReference type="ChEBI" id="CHEBI:29105"/>
        <label>1</label>
    </ligand>
</feature>
<feature type="disulfide bond" evidence="1">
    <location>
        <begin position="44"/>
        <end position="265"/>
    </location>
</feature>
<feature type="disulfide bond" evidence="1">
    <location>
        <begin position="187"/>
        <end position="235"/>
    </location>
</feature>
<feature type="disulfide bond" evidence="1">
    <location>
        <begin position="216"/>
        <end position="223"/>
    </location>
</feature>